<organism>
    <name type="scientific">Methanococcoides burtonii (strain DSM 6242 / NBRC 107633 / OCM 468 / ACE-M)</name>
    <dbReference type="NCBI Taxonomy" id="259564"/>
    <lineage>
        <taxon>Archaea</taxon>
        <taxon>Methanobacteriati</taxon>
        <taxon>Methanobacteriota</taxon>
        <taxon>Stenosarchaea group</taxon>
        <taxon>Methanomicrobia</taxon>
        <taxon>Methanosarcinales</taxon>
        <taxon>Methanosarcinaceae</taxon>
        <taxon>Methanococcoides</taxon>
    </lineage>
</organism>
<evidence type="ECO:0000255" key="1">
    <source>
        <dbReference type="HAMAP-Rule" id="MF_00354"/>
    </source>
</evidence>
<proteinExistence type="inferred from homology"/>
<name>IDI2_METBU</name>
<reference key="1">
    <citation type="journal article" date="2009" name="ISME J.">
        <title>The genome sequence of the psychrophilic archaeon, Methanococcoides burtonii: the role of genome evolution in cold adaptation.</title>
        <authorList>
            <person name="Allen M.A."/>
            <person name="Lauro F.M."/>
            <person name="Williams T.J."/>
            <person name="Burg D."/>
            <person name="Siddiqui K.S."/>
            <person name="De Francisci D."/>
            <person name="Chong K.W."/>
            <person name="Pilak O."/>
            <person name="Chew H.H."/>
            <person name="De Maere M.Z."/>
            <person name="Ting L."/>
            <person name="Katrib M."/>
            <person name="Ng C."/>
            <person name="Sowers K.R."/>
            <person name="Galperin M.Y."/>
            <person name="Anderson I.J."/>
            <person name="Ivanova N."/>
            <person name="Dalin E."/>
            <person name="Martinez M."/>
            <person name="Lapidus A."/>
            <person name="Hauser L."/>
            <person name="Land M."/>
            <person name="Thomas T."/>
            <person name="Cavicchioli R."/>
        </authorList>
    </citation>
    <scope>NUCLEOTIDE SEQUENCE [LARGE SCALE GENOMIC DNA]</scope>
    <source>
        <strain>DSM 6242 / NBRC 107633 / OCM 468 / ACE-M</strain>
    </source>
</reference>
<feature type="chain" id="PRO_1000048447" description="Isopentenyl-diphosphate delta-isomerase">
    <location>
        <begin position="1"/>
        <end position="362"/>
    </location>
</feature>
<feature type="binding site" evidence="1">
    <location>
        <begin position="6"/>
        <end position="7"/>
    </location>
    <ligand>
        <name>substrate</name>
    </ligand>
</feature>
<feature type="binding site" evidence="1">
    <location>
        <begin position="65"/>
        <end position="67"/>
    </location>
    <ligand>
        <name>FMN</name>
        <dbReference type="ChEBI" id="CHEBI:58210"/>
    </ligand>
</feature>
<feature type="binding site" evidence="1">
    <location>
        <begin position="95"/>
        <end position="97"/>
    </location>
    <ligand>
        <name>substrate</name>
    </ligand>
</feature>
<feature type="binding site" evidence="1">
    <location>
        <position position="95"/>
    </location>
    <ligand>
        <name>FMN</name>
        <dbReference type="ChEBI" id="CHEBI:58210"/>
    </ligand>
</feature>
<feature type="binding site" evidence="1">
    <location>
        <position position="124"/>
    </location>
    <ligand>
        <name>FMN</name>
        <dbReference type="ChEBI" id="CHEBI:58210"/>
    </ligand>
</feature>
<feature type="binding site" evidence="1">
    <location>
        <position position="158"/>
    </location>
    <ligand>
        <name>substrate</name>
    </ligand>
</feature>
<feature type="binding site" evidence="1">
    <location>
        <position position="159"/>
    </location>
    <ligand>
        <name>Mg(2+)</name>
        <dbReference type="ChEBI" id="CHEBI:18420"/>
    </ligand>
</feature>
<feature type="binding site" evidence="1">
    <location>
        <position position="189"/>
    </location>
    <ligand>
        <name>FMN</name>
        <dbReference type="ChEBI" id="CHEBI:58210"/>
    </ligand>
</feature>
<feature type="binding site" evidence="1">
    <location>
        <position position="219"/>
    </location>
    <ligand>
        <name>FMN</name>
        <dbReference type="ChEBI" id="CHEBI:58210"/>
    </ligand>
</feature>
<feature type="binding site" evidence="1">
    <location>
        <begin position="269"/>
        <end position="271"/>
    </location>
    <ligand>
        <name>FMN</name>
        <dbReference type="ChEBI" id="CHEBI:58210"/>
    </ligand>
</feature>
<feature type="binding site" evidence="1">
    <location>
        <begin position="290"/>
        <end position="291"/>
    </location>
    <ligand>
        <name>FMN</name>
        <dbReference type="ChEBI" id="CHEBI:58210"/>
    </ligand>
</feature>
<accession>Q12TH8</accession>
<keyword id="KW-0963">Cytoplasm</keyword>
<keyword id="KW-0285">Flavoprotein</keyword>
<keyword id="KW-0288">FMN</keyword>
<keyword id="KW-0413">Isomerase</keyword>
<keyword id="KW-0414">Isoprene biosynthesis</keyword>
<keyword id="KW-0460">Magnesium</keyword>
<keyword id="KW-0479">Metal-binding</keyword>
<keyword id="KW-0521">NADP</keyword>
<protein>
    <recommendedName>
        <fullName evidence="1">Isopentenyl-diphosphate delta-isomerase</fullName>
        <shortName evidence="1">IPP isomerase</shortName>
        <ecNumber evidence="1">5.3.3.2</ecNumber>
    </recommendedName>
    <alternativeName>
        <fullName evidence="1">Isopentenyl diphosphate:dimethylallyl diphosphate isomerase</fullName>
    </alternativeName>
    <alternativeName>
        <fullName evidence="1">Isopentenyl pyrophosphate isomerase</fullName>
    </alternativeName>
    <alternativeName>
        <fullName evidence="1">Type 2 isopentenyl diphosphate isomerase</fullName>
        <shortName evidence="1">IDI-2</shortName>
    </alternativeName>
</protein>
<sequence length="362" mass="38308">MSTSKRKIEHLELCAKRPVESRNVTSGFDDVMLIHKALPQIHMDEIDLSTDFLGKSLKAPFLIASITGGHPDTTPVNAALAEAAEELGVGIGVGSQRAAIEDPEQESSFSVVRDKAPNAFVYGNVGAAQIKEYGIEAIEKLVDMLDADALAVHLNFLQEAIQPEGDRDATGVLEMIKEVCSLNVPIIAKETGAGISKEDAALLKEAGVSAIDVGGVGGTSWSGVEVYRAHDSGDAISEDLGNLYWDFGIPTVSSVLECRSFVPVVATGGVRTGLDIAKSLSLGAYAASAALPFVGPALIGADEVVSSLSKMLNELRVAMFLCGCGNINELRTSSKVTVTGWTKEYITQRGFDPKDLDIRSDL</sequence>
<gene>
    <name evidence="1" type="primary">fni</name>
    <name type="ordered locus">Mbur_2397</name>
</gene>
<comment type="function">
    <text evidence="1">Involved in the biosynthesis of isoprenoids. Catalyzes the 1,3-allylic rearrangement of the homoallylic substrate isopentenyl (IPP) to its allylic isomer, dimethylallyl diphosphate (DMAPP).</text>
</comment>
<comment type="catalytic activity">
    <reaction evidence="1">
        <text>isopentenyl diphosphate = dimethylallyl diphosphate</text>
        <dbReference type="Rhea" id="RHEA:23284"/>
        <dbReference type="ChEBI" id="CHEBI:57623"/>
        <dbReference type="ChEBI" id="CHEBI:128769"/>
        <dbReference type="EC" id="5.3.3.2"/>
    </reaction>
</comment>
<comment type="cofactor">
    <cofactor evidence="1">
        <name>FMN</name>
        <dbReference type="ChEBI" id="CHEBI:58210"/>
    </cofactor>
</comment>
<comment type="cofactor">
    <cofactor evidence="1">
        <name>NADPH</name>
        <dbReference type="ChEBI" id="CHEBI:57783"/>
    </cofactor>
</comment>
<comment type="cofactor">
    <cofactor evidence="1">
        <name>Mg(2+)</name>
        <dbReference type="ChEBI" id="CHEBI:18420"/>
    </cofactor>
</comment>
<comment type="subunit">
    <text evidence="1">Homooctamer. Dimer of tetramers.</text>
</comment>
<comment type="subcellular location">
    <subcellularLocation>
        <location evidence="1">Cytoplasm</location>
    </subcellularLocation>
</comment>
<comment type="similarity">
    <text evidence="1">Belongs to the IPP isomerase type 2 family.</text>
</comment>
<dbReference type="EC" id="5.3.3.2" evidence="1"/>
<dbReference type="EMBL" id="CP000300">
    <property type="protein sequence ID" value="ABE53248.1"/>
    <property type="molecule type" value="Genomic_DNA"/>
</dbReference>
<dbReference type="RefSeq" id="WP_011500383.1">
    <property type="nucleotide sequence ID" value="NC_007955.1"/>
</dbReference>
<dbReference type="SMR" id="Q12TH8"/>
<dbReference type="STRING" id="259564.Mbur_2397"/>
<dbReference type="GeneID" id="3998985"/>
<dbReference type="KEGG" id="mbu:Mbur_2397"/>
<dbReference type="HOGENOM" id="CLU_065515_1_0_2"/>
<dbReference type="Proteomes" id="UP000001979">
    <property type="component" value="Chromosome"/>
</dbReference>
<dbReference type="GO" id="GO:0005737">
    <property type="term" value="C:cytoplasm"/>
    <property type="evidence" value="ECO:0007669"/>
    <property type="project" value="UniProtKB-SubCell"/>
</dbReference>
<dbReference type="GO" id="GO:0010181">
    <property type="term" value="F:FMN binding"/>
    <property type="evidence" value="ECO:0007669"/>
    <property type="project" value="UniProtKB-UniRule"/>
</dbReference>
<dbReference type="GO" id="GO:0004452">
    <property type="term" value="F:isopentenyl-diphosphate delta-isomerase activity"/>
    <property type="evidence" value="ECO:0007669"/>
    <property type="project" value="UniProtKB-UniRule"/>
</dbReference>
<dbReference type="GO" id="GO:0000287">
    <property type="term" value="F:magnesium ion binding"/>
    <property type="evidence" value="ECO:0007669"/>
    <property type="project" value="UniProtKB-UniRule"/>
</dbReference>
<dbReference type="GO" id="GO:0070402">
    <property type="term" value="F:NADPH binding"/>
    <property type="evidence" value="ECO:0007669"/>
    <property type="project" value="UniProtKB-UniRule"/>
</dbReference>
<dbReference type="GO" id="GO:0016491">
    <property type="term" value="F:oxidoreductase activity"/>
    <property type="evidence" value="ECO:0007669"/>
    <property type="project" value="InterPro"/>
</dbReference>
<dbReference type="GO" id="GO:0008299">
    <property type="term" value="P:isoprenoid biosynthetic process"/>
    <property type="evidence" value="ECO:0007669"/>
    <property type="project" value="UniProtKB-UniRule"/>
</dbReference>
<dbReference type="CDD" id="cd02811">
    <property type="entry name" value="IDI-2_FMN"/>
    <property type="match status" value="1"/>
</dbReference>
<dbReference type="Gene3D" id="3.20.20.70">
    <property type="entry name" value="Aldolase class I"/>
    <property type="match status" value="1"/>
</dbReference>
<dbReference type="HAMAP" id="MF_00354">
    <property type="entry name" value="Idi_2"/>
    <property type="match status" value="1"/>
</dbReference>
<dbReference type="InterPro" id="IPR013785">
    <property type="entry name" value="Aldolase_TIM"/>
</dbReference>
<dbReference type="InterPro" id="IPR000262">
    <property type="entry name" value="FMN-dep_DH"/>
</dbReference>
<dbReference type="InterPro" id="IPR011179">
    <property type="entry name" value="IPdP_isomerase"/>
</dbReference>
<dbReference type="NCBIfam" id="TIGR02151">
    <property type="entry name" value="IPP_isom_2"/>
    <property type="match status" value="1"/>
</dbReference>
<dbReference type="PANTHER" id="PTHR43665">
    <property type="entry name" value="ISOPENTENYL-DIPHOSPHATE DELTA-ISOMERASE"/>
    <property type="match status" value="1"/>
</dbReference>
<dbReference type="PANTHER" id="PTHR43665:SF1">
    <property type="entry name" value="ISOPENTENYL-DIPHOSPHATE DELTA-ISOMERASE"/>
    <property type="match status" value="1"/>
</dbReference>
<dbReference type="Pfam" id="PF01070">
    <property type="entry name" value="FMN_dh"/>
    <property type="match status" value="2"/>
</dbReference>
<dbReference type="PIRSF" id="PIRSF003314">
    <property type="entry name" value="IPP_isomerase"/>
    <property type="match status" value="1"/>
</dbReference>
<dbReference type="SMART" id="SM01240">
    <property type="entry name" value="IMPDH"/>
    <property type="match status" value="1"/>
</dbReference>
<dbReference type="SUPFAM" id="SSF51395">
    <property type="entry name" value="FMN-linked oxidoreductases"/>
    <property type="match status" value="1"/>
</dbReference>